<gene>
    <name type="primary">Sp5</name>
</gene>
<name>SP5_MOUSE</name>
<feature type="chain" id="PRO_0000047147" description="Transcription factor Sp5">
    <location>
        <begin position="1"/>
        <end position="398"/>
    </location>
</feature>
<feature type="zinc finger region" description="C2H2-type 1" evidence="2">
    <location>
        <begin position="296"/>
        <end position="320"/>
    </location>
</feature>
<feature type="zinc finger region" description="C2H2-type 2" evidence="2">
    <location>
        <begin position="326"/>
        <end position="350"/>
    </location>
</feature>
<feature type="zinc finger region" description="C2H2-type 3" evidence="2">
    <location>
        <begin position="356"/>
        <end position="378"/>
    </location>
</feature>
<feature type="region of interest" description="Disordered" evidence="3">
    <location>
        <begin position="160"/>
        <end position="215"/>
    </location>
</feature>
<feature type="short sequence motif" description="9aaTAD" evidence="1">
    <location>
        <begin position="187"/>
        <end position="195"/>
    </location>
</feature>
<feature type="compositionally biased region" description="Pro residues" evidence="3">
    <location>
        <begin position="163"/>
        <end position="174"/>
    </location>
</feature>
<proteinExistence type="evidence at transcript level"/>
<accession>Q9JHX2</accession>
<accession>Q149T2</accession>
<dbReference type="EMBL" id="AF279479">
    <property type="protein sequence ID" value="AAF87798.1"/>
    <property type="molecule type" value="mRNA"/>
</dbReference>
<dbReference type="EMBL" id="AK036234">
    <property type="protein sequence ID" value="BAC29355.1"/>
    <property type="molecule type" value="mRNA"/>
</dbReference>
<dbReference type="EMBL" id="BC116691">
    <property type="protein sequence ID" value="AAI16692.1"/>
    <property type="molecule type" value="mRNA"/>
</dbReference>
<dbReference type="EMBL" id="BC117505">
    <property type="protein sequence ID" value="AAI17506.1"/>
    <property type="molecule type" value="mRNA"/>
</dbReference>
<dbReference type="CCDS" id="CCDS16106.1"/>
<dbReference type="RefSeq" id="NP_071880.1">
    <property type="nucleotide sequence ID" value="NM_022435.2"/>
</dbReference>
<dbReference type="SMR" id="Q9JHX2"/>
<dbReference type="FunCoup" id="Q9JHX2">
    <property type="interactions" value="22"/>
</dbReference>
<dbReference type="STRING" id="10090.ENSMUSP00000097620"/>
<dbReference type="PhosphoSitePlus" id="Q9JHX2"/>
<dbReference type="jPOST" id="Q9JHX2"/>
<dbReference type="PaxDb" id="10090-ENSMUSP00000097620"/>
<dbReference type="Antibodypedia" id="53490">
    <property type="antibodies" value="46 antibodies from 20 providers"/>
</dbReference>
<dbReference type="DNASU" id="64406"/>
<dbReference type="Ensembl" id="ENSMUST00000100043.3">
    <property type="protein sequence ID" value="ENSMUSP00000097620.3"/>
    <property type="gene ID" value="ENSMUSG00000075304.3"/>
</dbReference>
<dbReference type="GeneID" id="64406"/>
<dbReference type="KEGG" id="mmu:64406"/>
<dbReference type="UCSC" id="uc008jzg.1">
    <property type="organism name" value="mouse"/>
</dbReference>
<dbReference type="AGR" id="MGI:1927715"/>
<dbReference type="CTD" id="389058"/>
<dbReference type="MGI" id="MGI:1927715">
    <property type="gene designation" value="Sp5"/>
</dbReference>
<dbReference type="VEuPathDB" id="HostDB:ENSMUSG00000075304"/>
<dbReference type="eggNOG" id="KOG1721">
    <property type="taxonomic scope" value="Eukaryota"/>
</dbReference>
<dbReference type="GeneTree" id="ENSGT00940000160673"/>
<dbReference type="HOGENOM" id="CLU_019484_5_0_1"/>
<dbReference type="InParanoid" id="Q9JHX2"/>
<dbReference type="OMA" id="KRFGCAE"/>
<dbReference type="OrthoDB" id="6365676at2759"/>
<dbReference type="PhylomeDB" id="Q9JHX2"/>
<dbReference type="TreeFam" id="TF350150"/>
<dbReference type="BioGRID-ORCS" id="64406">
    <property type="hits" value="1 hit in 79 CRISPR screens"/>
</dbReference>
<dbReference type="ChiTaRS" id="Sp5">
    <property type="organism name" value="mouse"/>
</dbReference>
<dbReference type="PRO" id="PR:Q9JHX2"/>
<dbReference type="Proteomes" id="UP000000589">
    <property type="component" value="Chromosome 2"/>
</dbReference>
<dbReference type="RNAct" id="Q9JHX2">
    <property type="molecule type" value="protein"/>
</dbReference>
<dbReference type="Bgee" id="ENSMUSG00000075304">
    <property type="expression patterns" value="Expressed in 1st arch pharyngeal cleft and 104 other cell types or tissues"/>
</dbReference>
<dbReference type="GO" id="GO:0005634">
    <property type="term" value="C:nucleus"/>
    <property type="evidence" value="ECO:0007669"/>
    <property type="project" value="UniProtKB-SubCell"/>
</dbReference>
<dbReference type="GO" id="GO:0003677">
    <property type="term" value="F:DNA binding"/>
    <property type="evidence" value="ECO:0000250"/>
    <property type="project" value="MGI"/>
</dbReference>
<dbReference type="GO" id="GO:0001227">
    <property type="term" value="F:DNA-binding transcription repressor activity, RNA polymerase II-specific"/>
    <property type="evidence" value="ECO:0000314"/>
    <property type="project" value="NTNU_SB"/>
</dbReference>
<dbReference type="GO" id="GO:0000977">
    <property type="term" value="F:RNA polymerase II transcription regulatory region sequence-specific DNA binding"/>
    <property type="evidence" value="ECO:0000314"/>
    <property type="project" value="NTNU_SB"/>
</dbReference>
<dbReference type="GO" id="GO:0043565">
    <property type="term" value="F:sequence-specific DNA binding"/>
    <property type="evidence" value="ECO:0000314"/>
    <property type="project" value="MGI"/>
</dbReference>
<dbReference type="GO" id="GO:0008270">
    <property type="term" value="F:zinc ion binding"/>
    <property type="evidence" value="ECO:0007669"/>
    <property type="project" value="UniProtKB-KW"/>
</dbReference>
<dbReference type="GO" id="GO:0060349">
    <property type="term" value="P:bone morphogenesis"/>
    <property type="evidence" value="ECO:0000316"/>
    <property type="project" value="MGI"/>
</dbReference>
<dbReference type="GO" id="GO:0000122">
    <property type="term" value="P:negative regulation of transcription by RNA polymerase II"/>
    <property type="evidence" value="ECO:0000314"/>
    <property type="project" value="NTNU_SB"/>
</dbReference>
<dbReference type="GO" id="GO:0036342">
    <property type="term" value="P:post-anal tail morphogenesis"/>
    <property type="evidence" value="ECO:0000316"/>
    <property type="project" value="MGI"/>
</dbReference>
<dbReference type="CDD" id="cd22541">
    <property type="entry name" value="SP5_N"/>
    <property type="match status" value="1"/>
</dbReference>
<dbReference type="FunFam" id="3.30.160.60:FF:000014">
    <property type="entry name" value="Transcription factor Sp3"/>
    <property type="match status" value="1"/>
</dbReference>
<dbReference type="FunFam" id="3.30.160.60:FF:000026">
    <property type="entry name" value="Transcription factor Sp3"/>
    <property type="match status" value="1"/>
</dbReference>
<dbReference type="FunFam" id="3.30.160.60:FF:000061">
    <property type="entry name" value="Transcription factor Sp3"/>
    <property type="match status" value="1"/>
</dbReference>
<dbReference type="Gene3D" id="3.30.160.60">
    <property type="entry name" value="Classic Zinc Finger"/>
    <property type="match status" value="3"/>
</dbReference>
<dbReference type="InterPro" id="IPR036236">
    <property type="entry name" value="Znf_C2H2_sf"/>
</dbReference>
<dbReference type="InterPro" id="IPR013087">
    <property type="entry name" value="Znf_C2H2_type"/>
</dbReference>
<dbReference type="PANTHER" id="PTHR23235">
    <property type="entry name" value="KRUEPPEL-LIKE TRANSCRIPTION FACTOR"/>
    <property type="match status" value="1"/>
</dbReference>
<dbReference type="PANTHER" id="PTHR23235:SF29">
    <property type="entry name" value="TRANSCRIPTION FACTOR SP5"/>
    <property type="match status" value="1"/>
</dbReference>
<dbReference type="Pfam" id="PF00096">
    <property type="entry name" value="zf-C2H2"/>
    <property type="match status" value="3"/>
</dbReference>
<dbReference type="SMART" id="SM00355">
    <property type="entry name" value="ZnF_C2H2"/>
    <property type="match status" value="3"/>
</dbReference>
<dbReference type="SUPFAM" id="SSF57667">
    <property type="entry name" value="beta-beta-alpha zinc fingers"/>
    <property type="match status" value="2"/>
</dbReference>
<dbReference type="PROSITE" id="PS00028">
    <property type="entry name" value="ZINC_FINGER_C2H2_1"/>
    <property type="match status" value="3"/>
</dbReference>
<dbReference type="PROSITE" id="PS50157">
    <property type="entry name" value="ZINC_FINGER_C2H2_2"/>
    <property type="match status" value="3"/>
</dbReference>
<protein>
    <recommendedName>
        <fullName>Transcription factor Sp5</fullName>
    </recommendedName>
</protein>
<keyword id="KW-0010">Activator</keyword>
<keyword id="KW-0238">DNA-binding</keyword>
<keyword id="KW-0479">Metal-binding</keyword>
<keyword id="KW-0539">Nucleus</keyword>
<keyword id="KW-1185">Reference proteome</keyword>
<keyword id="KW-0677">Repeat</keyword>
<keyword id="KW-0804">Transcription</keyword>
<keyword id="KW-0805">Transcription regulation</keyword>
<keyword id="KW-0862">Zinc</keyword>
<keyword id="KW-0863">Zinc-finger</keyword>
<comment type="function">
    <text>Binds to GC boxes promoters elements. Probable transcriptional activator that has a role in the coordination of changes in transcription required to generate pattern in the developing embryo.</text>
</comment>
<comment type="subcellular location">
    <subcellularLocation>
        <location>Nucleus</location>
    </subcellularLocation>
</comment>
<comment type="domain">
    <text evidence="1">The 9aaTAD motif is a transactivation domain present in a large number of yeast and animal transcription factors.</text>
</comment>
<comment type="similarity">
    <text evidence="4">Belongs to the Sp1 C2H2-type zinc-finger protein family.</text>
</comment>
<evidence type="ECO:0000250" key="1">
    <source>
        <dbReference type="UniProtKB" id="Q6BEB4"/>
    </source>
</evidence>
<evidence type="ECO:0000255" key="2">
    <source>
        <dbReference type="PROSITE-ProRule" id="PRU00042"/>
    </source>
</evidence>
<evidence type="ECO:0000256" key="3">
    <source>
        <dbReference type="SAM" id="MobiDB-lite"/>
    </source>
</evidence>
<evidence type="ECO:0000305" key="4"/>
<sequence>MAAVAVLRNDSLQAFLQDRTPSASPDLGKHSPLALLAATCSRIGQPGAAAAPDFLQVPYDPALGSPSRLFHPWTADMPAHSPGALPPPHPSLGLTPQKTHLQPSFGAAHELPLTPPADPSYPYEFSPVKMLPSSMAALPASCAPAYVPYAAQAALPPGYSNLLPPPPPPPPPPTCRQLSPAPAPDDLPWWSIPQSGAGPGSSGVPGTSLSSACAGPPHAPRFPASAAAAAAAAAALQRGLVLGPSDFAQYQSQIAALLQTKAPLAATARRCRRCRCPNCQAAGGAPEAEPGKKKQHVCHVPGCGKVYGKTSHLKAHLRWHTGERPFVCNWLFCGKSFTRSDELQRHLRTHTGEKRFACPECGKRFMRSDHLAKHVKTHQNKKLKVAEAGVKRENPRDL</sequence>
<reference key="1">
    <citation type="journal article" date="2000" name="Dev. Biol.">
        <title>Sp5, a new member of the Sp1 family, is dynamically expressed during development and genetically interacts with Brachyury.</title>
        <authorList>
            <person name="Harrison S.M."/>
            <person name="Houzelstein D."/>
            <person name="Dunwoodie S.L."/>
            <person name="Beddington R.S.P."/>
        </authorList>
    </citation>
    <scope>NUCLEOTIDE SEQUENCE [MRNA]</scope>
    <source>
        <strain>C57BL/6 X CBA</strain>
    </source>
</reference>
<reference key="2">
    <citation type="journal article" date="2005" name="Science">
        <title>The transcriptional landscape of the mammalian genome.</title>
        <authorList>
            <person name="Carninci P."/>
            <person name="Kasukawa T."/>
            <person name="Katayama S."/>
            <person name="Gough J."/>
            <person name="Frith M.C."/>
            <person name="Maeda N."/>
            <person name="Oyama R."/>
            <person name="Ravasi T."/>
            <person name="Lenhard B."/>
            <person name="Wells C."/>
            <person name="Kodzius R."/>
            <person name="Shimokawa K."/>
            <person name="Bajic V.B."/>
            <person name="Brenner S.E."/>
            <person name="Batalov S."/>
            <person name="Forrest A.R."/>
            <person name="Zavolan M."/>
            <person name="Davis M.J."/>
            <person name="Wilming L.G."/>
            <person name="Aidinis V."/>
            <person name="Allen J.E."/>
            <person name="Ambesi-Impiombato A."/>
            <person name="Apweiler R."/>
            <person name="Aturaliya R.N."/>
            <person name="Bailey T.L."/>
            <person name="Bansal M."/>
            <person name="Baxter L."/>
            <person name="Beisel K.W."/>
            <person name="Bersano T."/>
            <person name="Bono H."/>
            <person name="Chalk A.M."/>
            <person name="Chiu K.P."/>
            <person name="Choudhary V."/>
            <person name="Christoffels A."/>
            <person name="Clutterbuck D.R."/>
            <person name="Crowe M.L."/>
            <person name="Dalla E."/>
            <person name="Dalrymple B.P."/>
            <person name="de Bono B."/>
            <person name="Della Gatta G."/>
            <person name="di Bernardo D."/>
            <person name="Down T."/>
            <person name="Engstrom P."/>
            <person name="Fagiolini M."/>
            <person name="Faulkner G."/>
            <person name="Fletcher C.F."/>
            <person name="Fukushima T."/>
            <person name="Furuno M."/>
            <person name="Futaki S."/>
            <person name="Gariboldi M."/>
            <person name="Georgii-Hemming P."/>
            <person name="Gingeras T.R."/>
            <person name="Gojobori T."/>
            <person name="Green R.E."/>
            <person name="Gustincich S."/>
            <person name="Harbers M."/>
            <person name="Hayashi Y."/>
            <person name="Hensch T.K."/>
            <person name="Hirokawa N."/>
            <person name="Hill D."/>
            <person name="Huminiecki L."/>
            <person name="Iacono M."/>
            <person name="Ikeo K."/>
            <person name="Iwama A."/>
            <person name="Ishikawa T."/>
            <person name="Jakt M."/>
            <person name="Kanapin A."/>
            <person name="Katoh M."/>
            <person name="Kawasawa Y."/>
            <person name="Kelso J."/>
            <person name="Kitamura H."/>
            <person name="Kitano H."/>
            <person name="Kollias G."/>
            <person name="Krishnan S.P."/>
            <person name="Kruger A."/>
            <person name="Kummerfeld S.K."/>
            <person name="Kurochkin I.V."/>
            <person name="Lareau L.F."/>
            <person name="Lazarevic D."/>
            <person name="Lipovich L."/>
            <person name="Liu J."/>
            <person name="Liuni S."/>
            <person name="McWilliam S."/>
            <person name="Madan Babu M."/>
            <person name="Madera M."/>
            <person name="Marchionni L."/>
            <person name="Matsuda H."/>
            <person name="Matsuzawa S."/>
            <person name="Miki H."/>
            <person name="Mignone F."/>
            <person name="Miyake S."/>
            <person name="Morris K."/>
            <person name="Mottagui-Tabar S."/>
            <person name="Mulder N."/>
            <person name="Nakano N."/>
            <person name="Nakauchi H."/>
            <person name="Ng P."/>
            <person name="Nilsson R."/>
            <person name="Nishiguchi S."/>
            <person name="Nishikawa S."/>
            <person name="Nori F."/>
            <person name="Ohara O."/>
            <person name="Okazaki Y."/>
            <person name="Orlando V."/>
            <person name="Pang K.C."/>
            <person name="Pavan W.J."/>
            <person name="Pavesi G."/>
            <person name="Pesole G."/>
            <person name="Petrovsky N."/>
            <person name="Piazza S."/>
            <person name="Reed J."/>
            <person name="Reid J.F."/>
            <person name="Ring B.Z."/>
            <person name="Ringwald M."/>
            <person name="Rost B."/>
            <person name="Ruan Y."/>
            <person name="Salzberg S.L."/>
            <person name="Sandelin A."/>
            <person name="Schneider C."/>
            <person name="Schoenbach C."/>
            <person name="Sekiguchi K."/>
            <person name="Semple C.A."/>
            <person name="Seno S."/>
            <person name="Sessa L."/>
            <person name="Sheng Y."/>
            <person name="Shibata Y."/>
            <person name="Shimada H."/>
            <person name="Shimada K."/>
            <person name="Silva D."/>
            <person name="Sinclair B."/>
            <person name="Sperling S."/>
            <person name="Stupka E."/>
            <person name="Sugiura K."/>
            <person name="Sultana R."/>
            <person name="Takenaka Y."/>
            <person name="Taki K."/>
            <person name="Tammoja K."/>
            <person name="Tan S.L."/>
            <person name="Tang S."/>
            <person name="Taylor M.S."/>
            <person name="Tegner J."/>
            <person name="Teichmann S.A."/>
            <person name="Ueda H.R."/>
            <person name="van Nimwegen E."/>
            <person name="Verardo R."/>
            <person name="Wei C.L."/>
            <person name="Yagi K."/>
            <person name="Yamanishi H."/>
            <person name="Zabarovsky E."/>
            <person name="Zhu S."/>
            <person name="Zimmer A."/>
            <person name="Hide W."/>
            <person name="Bult C."/>
            <person name="Grimmond S.M."/>
            <person name="Teasdale R.D."/>
            <person name="Liu E.T."/>
            <person name="Brusic V."/>
            <person name="Quackenbush J."/>
            <person name="Wahlestedt C."/>
            <person name="Mattick J.S."/>
            <person name="Hume D.A."/>
            <person name="Kai C."/>
            <person name="Sasaki D."/>
            <person name="Tomaru Y."/>
            <person name="Fukuda S."/>
            <person name="Kanamori-Katayama M."/>
            <person name="Suzuki M."/>
            <person name="Aoki J."/>
            <person name="Arakawa T."/>
            <person name="Iida J."/>
            <person name="Imamura K."/>
            <person name="Itoh M."/>
            <person name="Kato T."/>
            <person name="Kawaji H."/>
            <person name="Kawagashira N."/>
            <person name="Kawashima T."/>
            <person name="Kojima M."/>
            <person name="Kondo S."/>
            <person name="Konno H."/>
            <person name="Nakano K."/>
            <person name="Ninomiya N."/>
            <person name="Nishio T."/>
            <person name="Okada M."/>
            <person name="Plessy C."/>
            <person name="Shibata K."/>
            <person name="Shiraki T."/>
            <person name="Suzuki S."/>
            <person name="Tagami M."/>
            <person name="Waki K."/>
            <person name="Watahiki A."/>
            <person name="Okamura-Oho Y."/>
            <person name="Suzuki H."/>
            <person name="Kawai J."/>
            <person name="Hayashizaki Y."/>
        </authorList>
    </citation>
    <scope>NUCLEOTIDE SEQUENCE [LARGE SCALE MRNA]</scope>
    <source>
        <strain>C57BL/6J</strain>
        <tissue>Cerebellum</tissue>
    </source>
</reference>
<reference key="3">
    <citation type="journal article" date="2004" name="Genome Res.">
        <title>The status, quality, and expansion of the NIH full-length cDNA project: the Mammalian Gene Collection (MGC).</title>
        <authorList>
            <consortium name="The MGC Project Team"/>
        </authorList>
    </citation>
    <scope>NUCLEOTIDE SEQUENCE [LARGE SCALE MRNA]</scope>
</reference>
<organism>
    <name type="scientific">Mus musculus</name>
    <name type="common">Mouse</name>
    <dbReference type="NCBI Taxonomy" id="10090"/>
    <lineage>
        <taxon>Eukaryota</taxon>
        <taxon>Metazoa</taxon>
        <taxon>Chordata</taxon>
        <taxon>Craniata</taxon>
        <taxon>Vertebrata</taxon>
        <taxon>Euteleostomi</taxon>
        <taxon>Mammalia</taxon>
        <taxon>Eutheria</taxon>
        <taxon>Euarchontoglires</taxon>
        <taxon>Glires</taxon>
        <taxon>Rodentia</taxon>
        <taxon>Myomorpha</taxon>
        <taxon>Muroidea</taxon>
        <taxon>Muridae</taxon>
        <taxon>Murinae</taxon>
        <taxon>Mus</taxon>
        <taxon>Mus</taxon>
    </lineage>
</organism>